<gene>
    <name evidence="1" type="primary">alaS</name>
    <name type="ordered locus">WIGBR2340</name>
</gene>
<dbReference type="EC" id="6.1.1.7" evidence="1"/>
<dbReference type="EMBL" id="BA000021">
    <property type="protein sequence ID" value="BAC24380.1"/>
    <property type="molecule type" value="Genomic_DNA"/>
</dbReference>
<dbReference type="SMR" id="Q8D2W8"/>
<dbReference type="STRING" id="36870.gene:10368726"/>
<dbReference type="KEGG" id="wbr:alaS"/>
<dbReference type="eggNOG" id="COG0013">
    <property type="taxonomic scope" value="Bacteria"/>
</dbReference>
<dbReference type="HOGENOM" id="CLU_004485_1_1_6"/>
<dbReference type="OrthoDB" id="9803884at2"/>
<dbReference type="Proteomes" id="UP000000562">
    <property type="component" value="Chromosome"/>
</dbReference>
<dbReference type="GO" id="GO:0005829">
    <property type="term" value="C:cytosol"/>
    <property type="evidence" value="ECO:0007669"/>
    <property type="project" value="TreeGrafter"/>
</dbReference>
<dbReference type="GO" id="GO:0004813">
    <property type="term" value="F:alanine-tRNA ligase activity"/>
    <property type="evidence" value="ECO:0007669"/>
    <property type="project" value="UniProtKB-UniRule"/>
</dbReference>
<dbReference type="GO" id="GO:0002161">
    <property type="term" value="F:aminoacyl-tRNA deacylase activity"/>
    <property type="evidence" value="ECO:0007669"/>
    <property type="project" value="TreeGrafter"/>
</dbReference>
<dbReference type="GO" id="GO:0005524">
    <property type="term" value="F:ATP binding"/>
    <property type="evidence" value="ECO:0007669"/>
    <property type="project" value="UniProtKB-UniRule"/>
</dbReference>
<dbReference type="GO" id="GO:0000049">
    <property type="term" value="F:tRNA binding"/>
    <property type="evidence" value="ECO:0007669"/>
    <property type="project" value="UniProtKB-KW"/>
</dbReference>
<dbReference type="GO" id="GO:0008270">
    <property type="term" value="F:zinc ion binding"/>
    <property type="evidence" value="ECO:0007669"/>
    <property type="project" value="UniProtKB-UniRule"/>
</dbReference>
<dbReference type="GO" id="GO:0006419">
    <property type="term" value="P:alanyl-tRNA aminoacylation"/>
    <property type="evidence" value="ECO:0007669"/>
    <property type="project" value="UniProtKB-UniRule"/>
</dbReference>
<dbReference type="GO" id="GO:0045892">
    <property type="term" value="P:negative regulation of DNA-templated transcription"/>
    <property type="evidence" value="ECO:0007669"/>
    <property type="project" value="TreeGrafter"/>
</dbReference>
<dbReference type="CDD" id="cd00673">
    <property type="entry name" value="AlaRS_core"/>
    <property type="match status" value="1"/>
</dbReference>
<dbReference type="FunFam" id="2.40.30.130:FF:000001">
    <property type="entry name" value="Alanine--tRNA ligase"/>
    <property type="match status" value="1"/>
</dbReference>
<dbReference type="FunFam" id="3.30.54.20:FF:000001">
    <property type="entry name" value="Alanine--tRNA ligase"/>
    <property type="match status" value="1"/>
</dbReference>
<dbReference type="FunFam" id="3.30.930.10:FF:000004">
    <property type="entry name" value="Alanine--tRNA ligase"/>
    <property type="match status" value="1"/>
</dbReference>
<dbReference type="FunFam" id="3.30.980.10:FF:000004">
    <property type="entry name" value="Alanine--tRNA ligase, cytoplasmic"/>
    <property type="match status" value="1"/>
</dbReference>
<dbReference type="Gene3D" id="2.40.30.130">
    <property type="match status" value="1"/>
</dbReference>
<dbReference type="Gene3D" id="3.10.310.40">
    <property type="match status" value="1"/>
</dbReference>
<dbReference type="Gene3D" id="3.30.54.20">
    <property type="match status" value="1"/>
</dbReference>
<dbReference type="Gene3D" id="6.10.250.550">
    <property type="match status" value="1"/>
</dbReference>
<dbReference type="Gene3D" id="3.30.930.10">
    <property type="entry name" value="Bira Bifunctional Protein, Domain 2"/>
    <property type="match status" value="1"/>
</dbReference>
<dbReference type="Gene3D" id="3.30.980.10">
    <property type="entry name" value="Threonyl-trna Synthetase, Chain A, domain 2"/>
    <property type="match status" value="1"/>
</dbReference>
<dbReference type="HAMAP" id="MF_00036_B">
    <property type="entry name" value="Ala_tRNA_synth_B"/>
    <property type="match status" value="1"/>
</dbReference>
<dbReference type="InterPro" id="IPR045864">
    <property type="entry name" value="aa-tRNA-synth_II/BPL/LPL"/>
</dbReference>
<dbReference type="InterPro" id="IPR002318">
    <property type="entry name" value="Ala-tRNA-lgiase_IIc"/>
</dbReference>
<dbReference type="InterPro" id="IPR018162">
    <property type="entry name" value="Ala-tRNA-ligase_IIc_anticod-bd"/>
</dbReference>
<dbReference type="InterPro" id="IPR018165">
    <property type="entry name" value="Ala-tRNA-synth_IIc_core"/>
</dbReference>
<dbReference type="InterPro" id="IPR018164">
    <property type="entry name" value="Ala-tRNA-synth_IIc_N"/>
</dbReference>
<dbReference type="InterPro" id="IPR050058">
    <property type="entry name" value="Ala-tRNA_ligase"/>
</dbReference>
<dbReference type="InterPro" id="IPR023033">
    <property type="entry name" value="Ala_tRNA_ligase_euk/bac"/>
</dbReference>
<dbReference type="InterPro" id="IPR018163">
    <property type="entry name" value="Thr/Ala-tRNA-synth_IIc_edit"/>
</dbReference>
<dbReference type="InterPro" id="IPR009000">
    <property type="entry name" value="Transl_B-barrel_sf"/>
</dbReference>
<dbReference type="InterPro" id="IPR012947">
    <property type="entry name" value="tRNA_SAD"/>
</dbReference>
<dbReference type="NCBIfam" id="TIGR00344">
    <property type="entry name" value="alaS"/>
    <property type="match status" value="1"/>
</dbReference>
<dbReference type="PANTHER" id="PTHR11777:SF9">
    <property type="entry name" value="ALANINE--TRNA LIGASE, CYTOPLASMIC"/>
    <property type="match status" value="1"/>
</dbReference>
<dbReference type="PANTHER" id="PTHR11777">
    <property type="entry name" value="ALANYL-TRNA SYNTHETASE"/>
    <property type="match status" value="1"/>
</dbReference>
<dbReference type="Pfam" id="PF01411">
    <property type="entry name" value="tRNA-synt_2c"/>
    <property type="match status" value="1"/>
</dbReference>
<dbReference type="Pfam" id="PF07973">
    <property type="entry name" value="tRNA_SAD"/>
    <property type="match status" value="1"/>
</dbReference>
<dbReference type="PRINTS" id="PR00980">
    <property type="entry name" value="TRNASYNTHALA"/>
</dbReference>
<dbReference type="SMART" id="SM00863">
    <property type="entry name" value="tRNA_SAD"/>
    <property type="match status" value="1"/>
</dbReference>
<dbReference type="SUPFAM" id="SSF55681">
    <property type="entry name" value="Class II aaRS and biotin synthetases"/>
    <property type="match status" value="1"/>
</dbReference>
<dbReference type="SUPFAM" id="SSF101353">
    <property type="entry name" value="Putative anticodon-binding domain of alanyl-tRNA synthetase (AlaRS)"/>
    <property type="match status" value="1"/>
</dbReference>
<dbReference type="SUPFAM" id="SSF55186">
    <property type="entry name" value="ThrRS/AlaRS common domain"/>
    <property type="match status" value="1"/>
</dbReference>
<dbReference type="SUPFAM" id="SSF50447">
    <property type="entry name" value="Translation proteins"/>
    <property type="match status" value="1"/>
</dbReference>
<dbReference type="PROSITE" id="PS50860">
    <property type="entry name" value="AA_TRNA_LIGASE_II_ALA"/>
    <property type="match status" value="1"/>
</dbReference>
<name>SYA_WIGBR</name>
<comment type="function">
    <text evidence="1">Catalyzes the attachment of alanine to tRNA(Ala) in a two-step reaction: alanine is first activated by ATP to form Ala-AMP and then transferred to the acceptor end of tRNA(Ala). Also edits incorrectly charged Ser-tRNA(Ala) and Gly-tRNA(Ala) via its editing domain.</text>
</comment>
<comment type="catalytic activity">
    <reaction evidence="1">
        <text>tRNA(Ala) + L-alanine + ATP = L-alanyl-tRNA(Ala) + AMP + diphosphate</text>
        <dbReference type="Rhea" id="RHEA:12540"/>
        <dbReference type="Rhea" id="RHEA-COMP:9657"/>
        <dbReference type="Rhea" id="RHEA-COMP:9923"/>
        <dbReference type="ChEBI" id="CHEBI:30616"/>
        <dbReference type="ChEBI" id="CHEBI:33019"/>
        <dbReference type="ChEBI" id="CHEBI:57972"/>
        <dbReference type="ChEBI" id="CHEBI:78442"/>
        <dbReference type="ChEBI" id="CHEBI:78497"/>
        <dbReference type="ChEBI" id="CHEBI:456215"/>
        <dbReference type="EC" id="6.1.1.7"/>
    </reaction>
</comment>
<comment type="cofactor">
    <cofactor evidence="1">
        <name>Zn(2+)</name>
        <dbReference type="ChEBI" id="CHEBI:29105"/>
    </cofactor>
    <text evidence="1">Binds 1 zinc ion per subunit.</text>
</comment>
<comment type="subunit">
    <text evidence="1">Homotetramer.</text>
</comment>
<comment type="subcellular location">
    <subcellularLocation>
        <location evidence="1">Cytoplasm</location>
    </subcellularLocation>
</comment>
<comment type="domain">
    <text evidence="1">Consists of three domains; the N-terminal catalytic domain, the editing domain and the C-terminal C-Ala domain. The editing domain removes incorrectly charged amino acids, while the C-Ala domain, along with tRNA(Ala), serves as a bridge to cooperatively bring together the editing and aminoacylation centers thus stimulating deacylation of misacylated tRNAs.</text>
</comment>
<comment type="similarity">
    <text evidence="1">Belongs to the class-II aminoacyl-tRNA synthetase family.</text>
</comment>
<reference key="1">
    <citation type="journal article" date="2002" name="Nat. Genet.">
        <title>Genome sequence of the endocellular obligate symbiont of tsetse flies, Wigglesworthia glossinidia.</title>
        <authorList>
            <person name="Akman L."/>
            <person name="Yamashita A."/>
            <person name="Watanabe H."/>
            <person name="Oshima K."/>
            <person name="Shiba T."/>
            <person name="Hattori M."/>
            <person name="Aksoy S."/>
        </authorList>
    </citation>
    <scope>NUCLEOTIDE SEQUENCE [LARGE SCALE GENOMIC DNA]</scope>
</reference>
<protein>
    <recommendedName>
        <fullName evidence="1">Alanine--tRNA ligase</fullName>
        <ecNumber evidence="1">6.1.1.7</ecNumber>
    </recommendedName>
    <alternativeName>
        <fullName evidence="1">Alanyl-tRNA synthetase</fullName>
        <shortName evidence="1">AlaRS</shortName>
    </alternativeName>
</protein>
<feature type="chain" id="PRO_0000075246" description="Alanine--tRNA ligase">
    <location>
        <begin position="1"/>
        <end position="873"/>
    </location>
</feature>
<feature type="binding site" evidence="1">
    <location>
        <position position="559"/>
    </location>
    <ligand>
        <name>Zn(2+)</name>
        <dbReference type="ChEBI" id="CHEBI:29105"/>
    </ligand>
</feature>
<feature type="binding site" evidence="1">
    <location>
        <position position="563"/>
    </location>
    <ligand>
        <name>Zn(2+)</name>
        <dbReference type="ChEBI" id="CHEBI:29105"/>
    </ligand>
</feature>
<feature type="binding site" evidence="1">
    <location>
        <position position="661"/>
    </location>
    <ligand>
        <name>Zn(2+)</name>
        <dbReference type="ChEBI" id="CHEBI:29105"/>
    </ligand>
</feature>
<feature type="binding site" evidence="1">
    <location>
        <position position="665"/>
    </location>
    <ligand>
        <name>Zn(2+)</name>
        <dbReference type="ChEBI" id="CHEBI:29105"/>
    </ligand>
</feature>
<evidence type="ECO:0000255" key="1">
    <source>
        <dbReference type="HAMAP-Rule" id="MF_00036"/>
    </source>
</evidence>
<keyword id="KW-0030">Aminoacyl-tRNA synthetase</keyword>
<keyword id="KW-0067">ATP-binding</keyword>
<keyword id="KW-0963">Cytoplasm</keyword>
<keyword id="KW-0436">Ligase</keyword>
<keyword id="KW-0479">Metal-binding</keyword>
<keyword id="KW-0547">Nucleotide-binding</keyword>
<keyword id="KW-0648">Protein biosynthesis</keyword>
<keyword id="KW-1185">Reference proteome</keyword>
<keyword id="KW-0694">RNA-binding</keyword>
<keyword id="KW-0820">tRNA-binding</keyword>
<keyword id="KW-0862">Zinc</keyword>
<accession>Q8D2W8</accession>
<organism>
    <name type="scientific">Wigglesworthia glossinidia brevipalpis</name>
    <dbReference type="NCBI Taxonomy" id="36870"/>
    <lineage>
        <taxon>Bacteria</taxon>
        <taxon>Pseudomonadati</taxon>
        <taxon>Pseudomonadota</taxon>
        <taxon>Gammaproteobacteria</taxon>
        <taxon>Enterobacterales</taxon>
        <taxon>Erwiniaceae</taxon>
        <taxon>Wigglesworthia</taxon>
    </lineage>
</organism>
<sequence length="873" mass="101258">MKKTTEIRNIFLNFFYEKKHKIMDSSTLIPDNDKTLLFTNSGMNQFKDIFLGFKKPKYIRVATAQRCIRVGGKHNDLNMIGKTNRHHTFFEMLGNFSFGSYFKSDTIQFAWELLTSKKWFDLSKEKLIVTIYYKDIESYNLWVEKTNINPKNIIFIKDKNNILYNSDNFWTMGDTGPCGPCSEIFYFFGKSINYKNIKIYDEEYIEIWNLVFMQFNLHLNGKLSRLPITSIDTGMGLERISCVLQKVNSNYSIDLFKKLIYEISKIIEIKNIKNYSLRIIADHIRSAIFLIYDGVIPSKEGRGYVLRRIIRRAIFHGNYILNKSCFFYKLVSPAINIMSYIDSKIIKKKKEIENIIKEEEKIFFFSIKKGMIFLNKNLKKIKNNILKGEIAFKLHDTFGFPIDLTNDICIKNKINVDEKGFFHAMNEQKNKSYKNSCFNKFNLKLLNNYCTKFCGYSYLKCESQILNIYNLKEEIKEIKENQEGIIILDKTPFYGESGGQVGDSGEIKSKDGVFSVIDTKKLGNYFYHYGKVIQGILKINNKITAYVNKIKRNKISLNHSSTHLLHYAINCLLDKNIIQKGSLICEKYLSFDFSYGKKINIEKINEIENIINEKIRDNVIIHSNNMDLKNALKIGAKALFKNKYKDLVRVLNIGDFSIELCGGTHANRTGDIGCFVITNFSKISSDTYRIKAITGETAIAFIQKKFNDINTISSLIKSNSNEIVNKIEKITENLKILEKKNKNLKNKIIKNYIKLIFNKIKKINNFEIIMDYFNEEIDKIILREILNKVKTNLKNGIVILASIKKDNLYIVTGVTNNLVNIITAKEIISYFKEIKSIKGGGNSYFAEAVGVVNLIDLKSMFKKIFMILSKNLK</sequence>
<proteinExistence type="inferred from homology"/>